<protein>
    <recommendedName>
        <fullName evidence="1">Cytoplasmic tRNA 2-thiolation protein 1</fullName>
        <ecNumber evidence="1">2.7.7.-</ecNumber>
    </recommendedName>
    <alternativeName>
        <fullName evidence="1">Cytoplasmic tRNA adenylyltransferase 1</fullName>
    </alternativeName>
</protein>
<reference key="1">
    <citation type="journal article" date="2008" name="Nature">
        <title>The genome of Laccaria bicolor provides insights into mycorrhizal symbiosis.</title>
        <authorList>
            <person name="Martin F."/>
            <person name="Aerts A."/>
            <person name="Ahren D."/>
            <person name="Brun A."/>
            <person name="Danchin E.G.J."/>
            <person name="Duchaussoy F."/>
            <person name="Gibon J."/>
            <person name="Kohler A."/>
            <person name="Lindquist E."/>
            <person name="Pereda V."/>
            <person name="Salamov A."/>
            <person name="Shapiro H.J."/>
            <person name="Wuyts J."/>
            <person name="Blaudez D."/>
            <person name="Buee M."/>
            <person name="Brokstein P."/>
            <person name="Canbaeck B."/>
            <person name="Cohen D."/>
            <person name="Courty P.E."/>
            <person name="Coutinho P.M."/>
            <person name="Delaruelle C."/>
            <person name="Detter J.C."/>
            <person name="Deveau A."/>
            <person name="DiFazio S."/>
            <person name="Duplessis S."/>
            <person name="Fraissinet-Tachet L."/>
            <person name="Lucic E."/>
            <person name="Frey-Klett P."/>
            <person name="Fourrey C."/>
            <person name="Feussner I."/>
            <person name="Gay G."/>
            <person name="Grimwood J."/>
            <person name="Hoegger P.J."/>
            <person name="Jain P."/>
            <person name="Kilaru S."/>
            <person name="Labbe J."/>
            <person name="Lin Y.C."/>
            <person name="Legue V."/>
            <person name="Le Tacon F."/>
            <person name="Marmeisse R."/>
            <person name="Melayah D."/>
            <person name="Montanini B."/>
            <person name="Muratet M."/>
            <person name="Nehls U."/>
            <person name="Niculita-Hirzel H."/>
            <person name="Oudot-Le Secq M.P."/>
            <person name="Peter M."/>
            <person name="Quesneville H."/>
            <person name="Rajashekar B."/>
            <person name="Reich M."/>
            <person name="Rouhier N."/>
            <person name="Schmutz J."/>
            <person name="Yin T."/>
            <person name="Chalot M."/>
            <person name="Henrissat B."/>
            <person name="Kuees U."/>
            <person name="Lucas S."/>
            <person name="Van de Peer Y."/>
            <person name="Podila G.K."/>
            <person name="Polle A."/>
            <person name="Pukkila P.J."/>
            <person name="Richardson P.M."/>
            <person name="Rouze P."/>
            <person name="Sanders I.R."/>
            <person name="Stajich J.E."/>
            <person name="Tunlid A."/>
            <person name="Tuskan G."/>
            <person name="Grigoriev I.V."/>
        </authorList>
    </citation>
    <scope>NUCLEOTIDE SEQUENCE [LARGE SCALE GENOMIC DNA]</scope>
    <source>
        <strain>S238N-H82 / ATCC MYA-4686</strain>
    </source>
</reference>
<comment type="function">
    <text evidence="1">Plays a central role in 2-thiolation of mcm(5)S(2)U at tRNA wobble positions of tRNA(Lys), tRNA(Glu) and tRNA(Gln). Directly binds tRNAs and probably acts by catalyzing adenylation of tRNAs, an intermediate required for 2-thiolation. It is unclear whether it acts as a sulfurtransferase that transfers sulfur from thiocarboxylated URM1 onto the uridine of tRNAs at wobble position. Prior mcm(5) tRNA modification by the elongator complex is required for 2-thiolation. May also be involved in protein urmylation.</text>
</comment>
<comment type="pathway">
    <text evidence="1">tRNA modification; 5-methoxycarbonylmethyl-2-thiouridine-tRNA biosynthesis.</text>
</comment>
<comment type="subcellular location">
    <subcellularLocation>
        <location evidence="1">Cytoplasm</location>
    </subcellularLocation>
</comment>
<comment type="similarity">
    <text evidence="1">Belongs to the TtcA family. CTU1/NCS6/ATPBD3 subfamily.</text>
</comment>
<evidence type="ECO:0000255" key="1">
    <source>
        <dbReference type="HAMAP-Rule" id="MF_03053"/>
    </source>
</evidence>
<keyword id="KW-0963">Cytoplasm</keyword>
<keyword id="KW-1185">Reference proteome</keyword>
<keyword id="KW-0694">RNA-binding</keyword>
<keyword id="KW-0808">Transferase</keyword>
<keyword id="KW-0819">tRNA processing</keyword>
<keyword id="KW-0820">tRNA-binding</keyword>
<proteinExistence type="inferred from homology"/>
<name>CTU1_LACBS</name>
<feature type="chain" id="PRO_0000368263" description="Cytoplasmic tRNA 2-thiolation protein 1">
    <location>
        <begin position="1"/>
        <end position="354"/>
    </location>
</feature>
<organism>
    <name type="scientific">Laccaria bicolor (strain S238N-H82 / ATCC MYA-4686)</name>
    <name type="common">Bicoloured deceiver</name>
    <name type="synonym">Laccaria laccata var. bicolor</name>
    <dbReference type="NCBI Taxonomy" id="486041"/>
    <lineage>
        <taxon>Eukaryota</taxon>
        <taxon>Fungi</taxon>
        <taxon>Dikarya</taxon>
        <taxon>Basidiomycota</taxon>
        <taxon>Agaricomycotina</taxon>
        <taxon>Agaricomycetes</taxon>
        <taxon>Agaricomycetidae</taxon>
        <taxon>Agaricales</taxon>
        <taxon>Agaricineae</taxon>
        <taxon>Hydnangiaceae</taxon>
        <taxon>Laccaria</taxon>
    </lineage>
</organism>
<dbReference type="EC" id="2.7.7.-" evidence="1"/>
<dbReference type="EMBL" id="DS547115">
    <property type="protein sequence ID" value="EDR05014.1"/>
    <property type="molecule type" value="Genomic_DNA"/>
</dbReference>
<dbReference type="RefSeq" id="XP_001884404.1">
    <property type="nucleotide sequence ID" value="XM_001884369.1"/>
</dbReference>
<dbReference type="SMR" id="B0DK66"/>
<dbReference type="FunCoup" id="B0DK66">
    <property type="interactions" value="171"/>
</dbReference>
<dbReference type="STRING" id="486041.B0DK66"/>
<dbReference type="GeneID" id="6079927"/>
<dbReference type="KEGG" id="lbc:LACBIDRAFT_330073"/>
<dbReference type="HOGENOM" id="CLU_026481_1_0_1"/>
<dbReference type="InParanoid" id="B0DK66"/>
<dbReference type="OrthoDB" id="198857at2759"/>
<dbReference type="UniPathway" id="UPA00988"/>
<dbReference type="Proteomes" id="UP000001194">
    <property type="component" value="Unassembled WGS sequence"/>
</dbReference>
<dbReference type="GO" id="GO:0005829">
    <property type="term" value="C:cytosol"/>
    <property type="evidence" value="ECO:0000250"/>
    <property type="project" value="UniProtKB"/>
</dbReference>
<dbReference type="GO" id="GO:0002144">
    <property type="term" value="C:cytosolic tRNA wobble base thiouridylase complex"/>
    <property type="evidence" value="ECO:0007669"/>
    <property type="project" value="TreeGrafter"/>
</dbReference>
<dbReference type="GO" id="GO:0005739">
    <property type="term" value="C:mitochondrion"/>
    <property type="evidence" value="ECO:0007669"/>
    <property type="project" value="TreeGrafter"/>
</dbReference>
<dbReference type="GO" id="GO:0016779">
    <property type="term" value="F:nucleotidyltransferase activity"/>
    <property type="evidence" value="ECO:0007669"/>
    <property type="project" value="UniProtKB-UniRule"/>
</dbReference>
<dbReference type="GO" id="GO:0000049">
    <property type="term" value="F:tRNA binding"/>
    <property type="evidence" value="ECO:0000250"/>
    <property type="project" value="UniProtKB"/>
</dbReference>
<dbReference type="GO" id="GO:0032447">
    <property type="term" value="P:protein urmylation"/>
    <property type="evidence" value="ECO:0007669"/>
    <property type="project" value="UniProtKB-UniRule"/>
</dbReference>
<dbReference type="GO" id="GO:0034227">
    <property type="term" value="P:tRNA thio-modification"/>
    <property type="evidence" value="ECO:0000250"/>
    <property type="project" value="UniProtKB"/>
</dbReference>
<dbReference type="GO" id="GO:0002143">
    <property type="term" value="P:tRNA wobble position uridine thiolation"/>
    <property type="evidence" value="ECO:0007669"/>
    <property type="project" value="TreeGrafter"/>
</dbReference>
<dbReference type="GO" id="GO:0002098">
    <property type="term" value="P:tRNA wobble uridine modification"/>
    <property type="evidence" value="ECO:0000250"/>
    <property type="project" value="UniProtKB"/>
</dbReference>
<dbReference type="CDD" id="cd01713">
    <property type="entry name" value="CTU1-like"/>
    <property type="match status" value="1"/>
</dbReference>
<dbReference type="FunFam" id="3.40.50.620:FF:000054">
    <property type="entry name" value="Cytoplasmic tRNA 2-thiolation protein 1"/>
    <property type="match status" value="1"/>
</dbReference>
<dbReference type="Gene3D" id="3.40.50.620">
    <property type="entry name" value="HUPs"/>
    <property type="match status" value="1"/>
</dbReference>
<dbReference type="HAMAP" id="MF_03053">
    <property type="entry name" value="CTU1"/>
    <property type="match status" value="1"/>
</dbReference>
<dbReference type="InterPro" id="IPR056369">
    <property type="entry name" value="CTU1-like_ATP-bd"/>
</dbReference>
<dbReference type="InterPro" id="IPR032442">
    <property type="entry name" value="CTU1_C"/>
</dbReference>
<dbReference type="InterPro" id="IPR000541">
    <property type="entry name" value="Ncs6/Tuc1/Ctu1"/>
</dbReference>
<dbReference type="InterPro" id="IPR014729">
    <property type="entry name" value="Rossmann-like_a/b/a_fold"/>
</dbReference>
<dbReference type="InterPro" id="IPR011063">
    <property type="entry name" value="TilS/TtcA_N"/>
</dbReference>
<dbReference type="InterPro" id="IPR035107">
    <property type="entry name" value="tRNA_thiolation_TtcA_Ctu1"/>
</dbReference>
<dbReference type="NCBIfam" id="TIGR00269">
    <property type="entry name" value="TIGR00269 family protein"/>
    <property type="match status" value="1"/>
</dbReference>
<dbReference type="PANTHER" id="PTHR11807">
    <property type="entry name" value="ATPASES OF THE PP SUPERFAMILY-RELATED"/>
    <property type="match status" value="1"/>
</dbReference>
<dbReference type="PANTHER" id="PTHR11807:SF12">
    <property type="entry name" value="CYTOPLASMIC TRNA 2-THIOLATION PROTEIN 1"/>
    <property type="match status" value="1"/>
</dbReference>
<dbReference type="Pfam" id="PF01171">
    <property type="entry name" value="ATP_bind_3"/>
    <property type="match status" value="1"/>
</dbReference>
<dbReference type="Pfam" id="PF16503">
    <property type="entry name" value="zn-ribbon_14"/>
    <property type="match status" value="1"/>
</dbReference>
<dbReference type="PIRSF" id="PIRSF004976">
    <property type="entry name" value="ATPase_YdaO"/>
    <property type="match status" value="1"/>
</dbReference>
<dbReference type="SUPFAM" id="SSF52402">
    <property type="entry name" value="Adenine nucleotide alpha hydrolases-like"/>
    <property type="match status" value="1"/>
</dbReference>
<gene>
    <name evidence="1" type="primary">NCS6</name>
    <name evidence="1" type="synonym">CTU1</name>
    <name type="ORF">LACBIDRAFT_330073</name>
</gene>
<sequence length="354" mass="39760">MAPQTCAICQKAKAMVKRPKTGEQICRECFFYVFETEVHNTITQANLFKPGDRVAIGASGGKDSTVLAYVMKMLNERYQYGLELFLLSIDEGITGYRDDSLETVKRNQQQYDMPLKILSYDELYGWTMDAIVSQVGRKNNCTFCGVFRRQALDRGAAMLNVDHIVTGHNADDIAETVLMNIMRGDIARLGRCTSICTQGEDTIRRSKPFKYAYEKEIVMYAYFKKLDYFSTECIYSPDAYRGHARVFLKDLEAARPSAIIDIIHSGEAFEVREEVKATQRVQQVCQRCGYMSSNALCKACTLLEGLERGMANSGITDRARKKLDAEGPAPDNLRTIPFFKPPSGGPLIAIESVS</sequence>
<accession>B0DK66</accession>